<keyword id="KW-0150">Chloroplast</keyword>
<keyword id="KW-0396">Initiation factor</keyword>
<keyword id="KW-0934">Plastid</keyword>
<keyword id="KW-0648">Protein biosynthesis</keyword>
<keyword id="KW-0694">RNA-binding</keyword>
<keyword id="KW-0699">rRNA-binding</keyword>
<comment type="function">
    <text evidence="1">One of the essential components for the initiation of protein synthesis. Stabilizes the binding of IF-2 and IF-3 on the 30S subunit to which N-formylmethionyl-tRNA(fMet) subsequently binds. Helps modulate mRNA selection, yielding the 30S pre-initiation complex (PIC). Upon addition of the 50S ribosomal subunit IF-1, IF-2 and IF-3 are released leaving the mature 70S translation initiation complex.</text>
</comment>
<comment type="subunit">
    <text evidence="1">Component of the 30S ribosomal translation pre-initiation complex which assembles on the 30S ribosome in the order IF-2 and IF-3, IF-1 and N-formylmethionyl-tRNA(fMet); mRNA recruitment can occur at any time during PIC assembly.</text>
</comment>
<comment type="subcellular location">
    <subcellularLocation>
        <location evidence="1">Plastid</location>
        <location evidence="1">Chloroplast</location>
    </subcellularLocation>
</comment>
<comment type="similarity">
    <text evidence="1">Belongs to the IF-1 family.</text>
</comment>
<accession>A1XFZ0</accession>
<name>IF1C_NUPAD</name>
<sequence>MKEQKLIHEGLITESLPNGMFWVRLDNEDLVLGYVSGRIRRSFIRILPGDRVKIEVSRYDSTRGRIIYRLRNKDSND</sequence>
<feature type="chain" id="PRO_0000338967" description="Translation initiation factor IF-1, chloroplastic">
    <location>
        <begin position="1"/>
        <end position="77"/>
    </location>
</feature>
<feature type="domain" description="S1-like" evidence="1">
    <location>
        <begin position="1"/>
        <end position="71"/>
    </location>
</feature>
<reference key="1">
    <citation type="journal article" date="2007" name="BMC Genomics">
        <title>Comparative chloroplast genomics: analyses including new sequences from the angiosperms Nuphar advena and Ranunculus macranthus.</title>
        <authorList>
            <person name="Raubeson L.A."/>
            <person name="Peery R."/>
            <person name="Chumley T.W."/>
            <person name="Dziubek C."/>
            <person name="Fourcade H.M."/>
            <person name="Boore J.L."/>
            <person name="Jansen R.K."/>
        </authorList>
    </citation>
    <scope>NUCLEOTIDE SEQUENCE [LARGE SCALE GENOMIC DNA]</scope>
</reference>
<protein>
    <recommendedName>
        <fullName evidence="1">Translation initiation factor IF-1, chloroplastic</fullName>
    </recommendedName>
</protein>
<evidence type="ECO:0000255" key="1">
    <source>
        <dbReference type="HAMAP-Rule" id="MF_00075"/>
    </source>
</evidence>
<dbReference type="EMBL" id="DQ354691">
    <property type="protein sequence ID" value="ABC60493.1"/>
    <property type="molecule type" value="Genomic_DNA"/>
</dbReference>
<dbReference type="RefSeq" id="YP_001001569.1">
    <property type="nucleotide sequence ID" value="NC_008788.1"/>
</dbReference>
<dbReference type="SMR" id="A1XFZ0"/>
<dbReference type="GeneID" id="4699653"/>
<dbReference type="GO" id="GO:0009507">
    <property type="term" value="C:chloroplast"/>
    <property type="evidence" value="ECO:0007669"/>
    <property type="project" value="UniProtKB-SubCell"/>
</dbReference>
<dbReference type="GO" id="GO:0005829">
    <property type="term" value="C:cytosol"/>
    <property type="evidence" value="ECO:0007669"/>
    <property type="project" value="TreeGrafter"/>
</dbReference>
<dbReference type="GO" id="GO:0043022">
    <property type="term" value="F:ribosome binding"/>
    <property type="evidence" value="ECO:0007669"/>
    <property type="project" value="UniProtKB-UniRule"/>
</dbReference>
<dbReference type="GO" id="GO:0019843">
    <property type="term" value="F:rRNA binding"/>
    <property type="evidence" value="ECO:0007669"/>
    <property type="project" value="UniProtKB-UniRule"/>
</dbReference>
<dbReference type="GO" id="GO:0003743">
    <property type="term" value="F:translation initiation factor activity"/>
    <property type="evidence" value="ECO:0007669"/>
    <property type="project" value="UniProtKB-UniRule"/>
</dbReference>
<dbReference type="CDD" id="cd04451">
    <property type="entry name" value="S1_IF1"/>
    <property type="match status" value="1"/>
</dbReference>
<dbReference type="FunFam" id="2.40.50.140:FF:000019">
    <property type="entry name" value="Translation initiation factor IF-1, chloroplastic"/>
    <property type="match status" value="1"/>
</dbReference>
<dbReference type="Gene3D" id="2.40.50.140">
    <property type="entry name" value="Nucleic acid-binding proteins"/>
    <property type="match status" value="1"/>
</dbReference>
<dbReference type="HAMAP" id="MF_00075">
    <property type="entry name" value="IF_1"/>
    <property type="match status" value="1"/>
</dbReference>
<dbReference type="InterPro" id="IPR012340">
    <property type="entry name" value="NA-bd_OB-fold"/>
</dbReference>
<dbReference type="InterPro" id="IPR006196">
    <property type="entry name" value="RNA-binding_domain_S1_IF1"/>
</dbReference>
<dbReference type="InterPro" id="IPR003029">
    <property type="entry name" value="S1_domain"/>
</dbReference>
<dbReference type="InterPro" id="IPR004368">
    <property type="entry name" value="TIF_IF1"/>
</dbReference>
<dbReference type="NCBIfam" id="TIGR00008">
    <property type="entry name" value="infA"/>
    <property type="match status" value="1"/>
</dbReference>
<dbReference type="PANTHER" id="PTHR33370">
    <property type="entry name" value="TRANSLATION INITIATION FACTOR IF-1, CHLOROPLASTIC"/>
    <property type="match status" value="1"/>
</dbReference>
<dbReference type="PANTHER" id="PTHR33370:SF1">
    <property type="entry name" value="TRANSLATION INITIATION FACTOR IF-1, CHLOROPLASTIC"/>
    <property type="match status" value="1"/>
</dbReference>
<dbReference type="Pfam" id="PF01176">
    <property type="entry name" value="eIF-1a"/>
    <property type="match status" value="1"/>
</dbReference>
<dbReference type="SMART" id="SM00316">
    <property type="entry name" value="S1"/>
    <property type="match status" value="1"/>
</dbReference>
<dbReference type="SUPFAM" id="SSF50249">
    <property type="entry name" value="Nucleic acid-binding proteins"/>
    <property type="match status" value="1"/>
</dbReference>
<dbReference type="PROSITE" id="PS50832">
    <property type="entry name" value="S1_IF1_TYPE"/>
    <property type="match status" value="1"/>
</dbReference>
<gene>
    <name evidence="1" type="primary">infA</name>
</gene>
<geneLocation type="chloroplast"/>
<organism>
    <name type="scientific">Nuphar advena</name>
    <name type="common">Common spatterdock</name>
    <name type="synonym">Nuphar lutea subsp. advena</name>
    <dbReference type="NCBI Taxonomy" id="77108"/>
    <lineage>
        <taxon>Eukaryota</taxon>
        <taxon>Viridiplantae</taxon>
        <taxon>Streptophyta</taxon>
        <taxon>Embryophyta</taxon>
        <taxon>Tracheophyta</taxon>
        <taxon>Spermatophyta</taxon>
        <taxon>Magnoliopsida</taxon>
        <taxon>Nymphaeales</taxon>
        <taxon>Nymphaeaceae</taxon>
        <taxon>Nuphar</taxon>
    </lineage>
</organism>
<proteinExistence type="inferred from homology"/>